<gene>
    <name type="primary">UNC93A</name>
</gene>
<accession>Q86WB7</accession>
<accession>B3KRP5</accession>
<accession>Q4QQJ4</accession>
<accession>Q5JZD6</accession>
<dbReference type="EMBL" id="AJ508812">
    <property type="protein sequence ID" value="CAD48541.1"/>
    <property type="molecule type" value="mRNA"/>
</dbReference>
<dbReference type="EMBL" id="AJ422141">
    <property type="protein sequence ID" value="CAD19521.1"/>
    <property type="molecule type" value="mRNA"/>
</dbReference>
<dbReference type="EMBL" id="AK091987">
    <property type="protein sequence ID" value="BAG52457.1"/>
    <property type="molecule type" value="mRNA"/>
</dbReference>
<dbReference type="EMBL" id="AL021331">
    <property type="status" value="NOT_ANNOTATED_CDS"/>
    <property type="molecule type" value="Genomic_DNA"/>
</dbReference>
<dbReference type="EMBL" id="BC098248">
    <property type="protein sequence ID" value="AAH98248.1"/>
    <property type="molecule type" value="mRNA"/>
</dbReference>
<dbReference type="EMBL" id="BC099718">
    <property type="protein sequence ID" value="AAH99718.1"/>
    <property type="molecule type" value="mRNA"/>
</dbReference>
<dbReference type="EMBL" id="BC105635">
    <property type="protein sequence ID" value="AAI05636.1"/>
    <property type="molecule type" value="mRNA"/>
</dbReference>
<dbReference type="CCDS" id="CCDS47515.1">
    <molecule id="Q86WB7-2"/>
</dbReference>
<dbReference type="CCDS" id="CCDS5300.1">
    <molecule id="Q86WB7-1"/>
</dbReference>
<dbReference type="RefSeq" id="NP_001137419.1">
    <molecule id="Q86WB7-2"/>
    <property type="nucleotide sequence ID" value="NM_001143947.2"/>
</dbReference>
<dbReference type="RefSeq" id="NP_061847.2">
    <molecule id="Q86WB7-1"/>
    <property type="nucleotide sequence ID" value="NM_018974.3"/>
</dbReference>
<dbReference type="RefSeq" id="XP_011534207.1">
    <molecule id="Q86WB7-1"/>
    <property type="nucleotide sequence ID" value="XM_011535905.3"/>
</dbReference>
<dbReference type="RefSeq" id="XP_011534208.1">
    <molecule id="Q86WB7-1"/>
    <property type="nucleotide sequence ID" value="XM_011535906.3"/>
</dbReference>
<dbReference type="RefSeq" id="XP_011534209.1">
    <molecule id="Q86WB7-1"/>
    <property type="nucleotide sequence ID" value="XM_011535907.3"/>
</dbReference>
<dbReference type="RefSeq" id="XP_016866447.1">
    <molecule id="Q86WB7-1"/>
    <property type="nucleotide sequence ID" value="XM_017010958.1"/>
</dbReference>
<dbReference type="RefSeq" id="XP_047274857.1">
    <molecule id="Q86WB7-2"/>
    <property type="nucleotide sequence ID" value="XM_047418901.1"/>
</dbReference>
<dbReference type="RefSeq" id="XP_054211647.1">
    <molecule id="Q86WB7-1"/>
    <property type="nucleotide sequence ID" value="XM_054355672.1"/>
</dbReference>
<dbReference type="RefSeq" id="XP_054211648.1">
    <molecule id="Q86WB7-1"/>
    <property type="nucleotide sequence ID" value="XM_054355673.1"/>
</dbReference>
<dbReference type="RefSeq" id="XP_054211649.1">
    <molecule id="Q86WB7-1"/>
    <property type="nucleotide sequence ID" value="XM_054355674.1"/>
</dbReference>
<dbReference type="RefSeq" id="XP_054211650.1">
    <molecule id="Q86WB7-1"/>
    <property type="nucleotide sequence ID" value="XM_054355675.1"/>
</dbReference>
<dbReference type="RefSeq" id="XP_054211652.1">
    <molecule id="Q86WB7-2"/>
    <property type="nucleotide sequence ID" value="XM_054355677.1"/>
</dbReference>
<dbReference type="SMR" id="Q86WB7"/>
<dbReference type="BioGRID" id="119937">
    <property type="interactions" value="23"/>
</dbReference>
<dbReference type="FunCoup" id="Q86WB7">
    <property type="interactions" value="764"/>
</dbReference>
<dbReference type="IntAct" id="Q86WB7">
    <property type="interactions" value="19"/>
</dbReference>
<dbReference type="STRING" id="9606.ENSP00000230256"/>
<dbReference type="TCDB" id="2.A.1.58.9">
    <property type="family name" value="the major facilitator superfamily (mfs)"/>
</dbReference>
<dbReference type="GlyCosmos" id="Q86WB7">
    <property type="glycosylation" value="1 site, No reported glycans"/>
</dbReference>
<dbReference type="GlyGen" id="Q86WB7">
    <property type="glycosylation" value="1 site"/>
</dbReference>
<dbReference type="BioMuta" id="UNC93A"/>
<dbReference type="DMDM" id="67462066"/>
<dbReference type="MassIVE" id="Q86WB7"/>
<dbReference type="PaxDb" id="9606-ENSP00000230256"/>
<dbReference type="PeptideAtlas" id="Q86WB7"/>
<dbReference type="ProteomicsDB" id="70143">
    <molecule id="Q86WB7-1"/>
</dbReference>
<dbReference type="ProteomicsDB" id="70144">
    <molecule id="Q86WB7-2"/>
</dbReference>
<dbReference type="Antibodypedia" id="33537">
    <property type="antibodies" value="101 antibodies from 20 providers"/>
</dbReference>
<dbReference type="DNASU" id="54346"/>
<dbReference type="Ensembl" id="ENST00000230256.8">
    <molecule id="Q86WB7-1"/>
    <property type="protein sequence ID" value="ENSP00000230256.3"/>
    <property type="gene ID" value="ENSG00000112494.10"/>
</dbReference>
<dbReference type="Ensembl" id="ENST00000366829.2">
    <molecule id="Q86WB7-2"/>
    <property type="protein sequence ID" value="ENSP00000355794.2"/>
    <property type="gene ID" value="ENSG00000112494.10"/>
</dbReference>
<dbReference type="GeneID" id="54346"/>
<dbReference type="KEGG" id="hsa:54346"/>
<dbReference type="MANE-Select" id="ENST00000230256.8">
    <property type="protein sequence ID" value="ENSP00000230256.3"/>
    <property type="RefSeq nucleotide sequence ID" value="NM_018974.4"/>
    <property type="RefSeq protein sequence ID" value="NP_061847.2"/>
</dbReference>
<dbReference type="UCSC" id="uc003qvq.4">
    <molecule id="Q86WB7-1"/>
    <property type="organism name" value="human"/>
</dbReference>
<dbReference type="AGR" id="HGNC:12570"/>
<dbReference type="CTD" id="54346"/>
<dbReference type="DisGeNET" id="54346"/>
<dbReference type="GeneCards" id="UNC93A"/>
<dbReference type="HGNC" id="HGNC:12570">
    <property type="gene designation" value="UNC93A"/>
</dbReference>
<dbReference type="HPA" id="ENSG00000112494">
    <property type="expression patterns" value="Group enriched (esophagus, intestine, liver, skin)"/>
</dbReference>
<dbReference type="MIM" id="607995">
    <property type="type" value="gene"/>
</dbReference>
<dbReference type="neXtProt" id="NX_Q86WB7"/>
<dbReference type="OpenTargets" id="ENSG00000112494"/>
<dbReference type="PharmGKB" id="PA37207"/>
<dbReference type="VEuPathDB" id="HostDB:ENSG00000112494"/>
<dbReference type="eggNOG" id="KOG3097">
    <property type="taxonomic scope" value="Eukaryota"/>
</dbReference>
<dbReference type="GeneTree" id="ENSGT00530000063359"/>
<dbReference type="HOGENOM" id="CLU_025356_1_1_1"/>
<dbReference type="InParanoid" id="Q86WB7"/>
<dbReference type="OMA" id="NTACIIA"/>
<dbReference type="OrthoDB" id="78663at2759"/>
<dbReference type="PAN-GO" id="Q86WB7">
    <property type="GO annotations" value="0 GO annotations based on evolutionary models"/>
</dbReference>
<dbReference type="PhylomeDB" id="Q86WB7"/>
<dbReference type="TreeFam" id="TF314905"/>
<dbReference type="PathwayCommons" id="Q86WB7"/>
<dbReference type="SignaLink" id="Q86WB7"/>
<dbReference type="BioGRID-ORCS" id="54346">
    <property type="hits" value="13 hits in 1140 CRISPR screens"/>
</dbReference>
<dbReference type="GenomeRNAi" id="54346"/>
<dbReference type="Pharos" id="Q86WB7">
    <property type="development level" value="Tdark"/>
</dbReference>
<dbReference type="PRO" id="PR:Q86WB7"/>
<dbReference type="Proteomes" id="UP000005640">
    <property type="component" value="Chromosome 6"/>
</dbReference>
<dbReference type="RNAct" id="Q86WB7">
    <property type="molecule type" value="protein"/>
</dbReference>
<dbReference type="Bgee" id="ENSG00000112494">
    <property type="expression patterns" value="Expressed in skin of leg and 56 other cell types or tissues"/>
</dbReference>
<dbReference type="ExpressionAtlas" id="Q86WB7">
    <property type="expression patterns" value="baseline and differential"/>
</dbReference>
<dbReference type="GO" id="GO:0016020">
    <property type="term" value="C:membrane"/>
    <property type="evidence" value="ECO:0000303"/>
    <property type="project" value="UniProtKB"/>
</dbReference>
<dbReference type="GO" id="GO:0005886">
    <property type="term" value="C:plasma membrane"/>
    <property type="evidence" value="ECO:0000314"/>
    <property type="project" value="UniProtKB"/>
</dbReference>
<dbReference type="CDD" id="cd17406">
    <property type="entry name" value="MFS_unc93A_like"/>
    <property type="match status" value="1"/>
</dbReference>
<dbReference type="FunFam" id="1.20.1250.20:FF:000290">
    <property type="entry name" value="Unc-93 homolog A"/>
    <property type="match status" value="1"/>
</dbReference>
<dbReference type="Gene3D" id="1.20.1250.20">
    <property type="entry name" value="MFS general substrate transporter like domains"/>
    <property type="match status" value="2"/>
</dbReference>
<dbReference type="InterPro" id="IPR010291">
    <property type="entry name" value="Ion_channel_UNC-93"/>
</dbReference>
<dbReference type="InterPro" id="IPR036259">
    <property type="entry name" value="MFS_trans_sf"/>
</dbReference>
<dbReference type="InterPro" id="IPR051951">
    <property type="entry name" value="UNC-93_regulatory"/>
</dbReference>
<dbReference type="PANTHER" id="PTHR19444:SF13">
    <property type="entry name" value="PROTEIN UNC-93 HOMOLOG A"/>
    <property type="match status" value="1"/>
</dbReference>
<dbReference type="PANTHER" id="PTHR19444">
    <property type="entry name" value="UNC-93 RELATED"/>
    <property type="match status" value="1"/>
</dbReference>
<dbReference type="Pfam" id="PF05978">
    <property type="entry name" value="UNC-93"/>
    <property type="match status" value="1"/>
</dbReference>
<dbReference type="SUPFAM" id="SSF103473">
    <property type="entry name" value="MFS general substrate transporter"/>
    <property type="match status" value="1"/>
</dbReference>
<sequence length="457" mass="50270">MDRSLRNVLVVSFGFLLLFTAYGGLQSLQSSLYSEEGLGVTALSTLYGGMLLSSMFLPPLLIERLGCKGTIILSMCGYVAFSVGNFFASWYTLIPTSILLGLGAAPLWSAQCTYLTITGNTHAEKAGKRGKDMVNQYFGIFFLIFQSSGVWGNLISSLVFGQTPSQETLPEEQLTSCGASDCLMATTTTNSTQRPSQQLVYTLLGIYTGSGVLAVLMIAAFLQPIRDVQRESEGEKKSVPFWSTLLSTFKLYRDKRLCLLILLPLYSGLQQGFLSSEYTRSYVTCTLGIQFVGYVMICFSATDALCSVLYGKVSQYTGRAVLYVLGAVTHVSCMIALLLWRPRADHLAVFFVFSGLWGVADAVWQTQNNALYGVLFEKSKEAAFANYRLWEALGFVIAFGYSMFLCVHVKLYILLGVLSLTMVAYGLVECVESKNPIRPHAPGQVNQAEDEEIQTKM</sequence>
<reference key="1">
    <citation type="journal article" date="2002" name="BMC Genet.">
        <title>The human homologue of unc-93 maps to chromosome 6q27 - characterisation and analysis in sporadic epithelial ovarian cancer.</title>
        <authorList>
            <person name="Liu Y."/>
            <person name="Dodds P."/>
            <person name="Emilion G."/>
            <person name="Mungall A.J."/>
            <person name="Dunham I."/>
            <person name="Beck S."/>
            <person name="Wells R.S."/>
            <person name="Charnock F.M.L."/>
            <person name="Ganesan T.S."/>
        </authorList>
    </citation>
    <scope>NUCLEOTIDE SEQUENCE [MRNA] (ISOFORM 1)</scope>
    <scope>SUBCELLULAR LOCATION</scope>
    <scope>TISSUE SPECIFICITY</scope>
    <scope>VARIANTS ILE-292; HIS-387; THR-403; ILE-409 AND ALA-445</scope>
    <source>
        <tissue>Ovary</tissue>
    </source>
</reference>
<reference key="2">
    <citation type="thesis" date="2001" institute="University of Hannover" country="Germany">
        <title>Cloning and characterization of mammalian homologs of unc-93 from Caenorhabditis elegans, a protein relevant for muscle contraction.</title>
        <authorList>
            <person name="Kollewe A."/>
        </authorList>
    </citation>
    <scope>NUCLEOTIDE SEQUENCE [MRNA] (ISOFORM 1)</scope>
    <source>
        <tissue>Liver</tissue>
        <tissue>Spleen</tissue>
    </source>
</reference>
<reference key="3">
    <citation type="journal article" date="2004" name="Nat. Genet.">
        <title>Complete sequencing and characterization of 21,243 full-length human cDNAs.</title>
        <authorList>
            <person name="Ota T."/>
            <person name="Suzuki Y."/>
            <person name="Nishikawa T."/>
            <person name="Otsuki T."/>
            <person name="Sugiyama T."/>
            <person name="Irie R."/>
            <person name="Wakamatsu A."/>
            <person name="Hayashi K."/>
            <person name="Sato H."/>
            <person name="Nagai K."/>
            <person name="Kimura K."/>
            <person name="Makita H."/>
            <person name="Sekine M."/>
            <person name="Obayashi M."/>
            <person name="Nishi T."/>
            <person name="Shibahara T."/>
            <person name="Tanaka T."/>
            <person name="Ishii S."/>
            <person name="Yamamoto J."/>
            <person name="Saito K."/>
            <person name="Kawai Y."/>
            <person name="Isono Y."/>
            <person name="Nakamura Y."/>
            <person name="Nagahari K."/>
            <person name="Murakami K."/>
            <person name="Yasuda T."/>
            <person name="Iwayanagi T."/>
            <person name="Wagatsuma M."/>
            <person name="Shiratori A."/>
            <person name="Sudo H."/>
            <person name="Hosoiri T."/>
            <person name="Kaku Y."/>
            <person name="Kodaira H."/>
            <person name="Kondo H."/>
            <person name="Sugawara M."/>
            <person name="Takahashi M."/>
            <person name="Kanda K."/>
            <person name="Yokoi T."/>
            <person name="Furuya T."/>
            <person name="Kikkawa E."/>
            <person name="Omura Y."/>
            <person name="Abe K."/>
            <person name="Kamihara K."/>
            <person name="Katsuta N."/>
            <person name="Sato K."/>
            <person name="Tanikawa M."/>
            <person name="Yamazaki M."/>
            <person name="Ninomiya K."/>
            <person name="Ishibashi T."/>
            <person name="Yamashita H."/>
            <person name="Murakawa K."/>
            <person name="Fujimori K."/>
            <person name="Tanai H."/>
            <person name="Kimata M."/>
            <person name="Watanabe M."/>
            <person name="Hiraoka S."/>
            <person name="Chiba Y."/>
            <person name="Ishida S."/>
            <person name="Ono Y."/>
            <person name="Takiguchi S."/>
            <person name="Watanabe S."/>
            <person name="Yosida M."/>
            <person name="Hotuta T."/>
            <person name="Kusano J."/>
            <person name="Kanehori K."/>
            <person name="Takahashi-Fujii A."/>
            <person name="Hara H."/>
            <person name="Tanase T.-O."/>
            <person name="Nomura Y."/>
            <person name="Togiya S."/>
            <person name="Komai F."/>
            <person name="Hara R."/>
            <person name="Takeuchi K."/>
            <person name="Arita M."/>
            <person name="Imose N."/>
            <person name="Musashino K."/>
            <person name="Yuuki H."/>
            <person name="Oshima A."/>
            <person name="Sasaki N."/>
            <person name="Aotsuka S."/>
            <person name="Yoshikawa Y."/>
            <person name="Matsunawa H."/>
            <person name="Ichihara T."/>
            <person name="Shiohata N."/>
            <person name="Sano S."/>
            <person name="Moriya S."/>
            <person name="Momiyama H."/>
            <person name="Satoh N."/>
            <person name="Takami S."/>
            <person name="Terashima Y."/>
            <person name="Suzuki O."/>
            <person name="Nakagawa S."/>
            <person name="Senoh A."/>
            <person name="Mizoguchi H."/>
            <person name="Goto Y."/>
            <person name="Shimizu F."/>
            <person name="Wakebe H."/>
            <person name="Hishigaki H."/>
            <person name="Watanabe T."/>
            <person name="Sugiyama A."/>
            <person name="Takemoto M."/>
            <person name="Kawakami B."/>
            <person name="Yamazaki M."/>
            <person name="Watanabe K."/>
            <person name="Kumagai A."/>
            <person name="Itakura S."/>
            <person name="Fukuzumi Y."/>
            <person name="Fujimori Y."/>
            <person name="Komiyama M."/>
            <person name="Tashiro H."/>
            <person name="Tanigami A."/>
            <person name="Fujiwara T."/>
            <person name="Ono T."/>
            <person name="Yamada K."/>
            <person name="Fujii Y."/>
            <person name="Ozaki K."/>
            <person name="Hirao M."/>
            <person name="Ohmori Y."/>
            <person name="Kawabata A."/>
            <person name="Hikiji T."/>
            <person name="Kobatake N."/>
            <person name="Inagaki H."/>
            <person name="Ikema Y."/>
            <person name="Okamoto S."/>
            <person name="Okitani R."/>
            <person name="Kawakami T."/>
            <person name="Noguchi S."/>
            <person name="Itoh T."/>
            <person name="Shigeta K."/>
            <person name="Senba T."/>
            <person name="Matsumura K."/>
            <person name="Nakajima Y."/>
            <person name="Mizuno T."/>
            <person name="Morinaga M."/>
            <person name="Sasaki M."/>
            <person name="Togashi T."/>
            <person name="Oyama M."/>
            <person name="Hata H."/>
            <person name="Watanabe M."/>
            <person name="Komatsu T."/>
            <person name="Mizushima-Sugano J."/>
            <person name="Satoh T."/>
            <person name="Shirai Y."/>
            <person name="Takahashi Y."/>
            <person name="Nakagawa K."/>
            <person name="Okumura K."/>
            <person name="Nagase T."/>
            <person name="Nomura N."/>
            <person name="Kikuchi H."/>
            <person name="Masuho Y."/>
            <person name="Yamashita R."/>
            <person name="Nakai K."/>
            <person name="Yada T."/>
            <person name="Nakamura Y."/>
            <person name="Ohara O."/>
            <person name="Isogai T."/>
            <person name="Sugano S."/>
        </authorList>
    </citation>
    <scope>NUCLEOTIDE SEQUENCE [LARGE SCALE MRNA] (ISOFORM 1)</scope>
    <source>
        <tissue>Liver</tissue>
    </source>
</reference>
<reference key="4">
    <citation type="journal article" date="2003" name="Nature">
        <title>The DNA sequence and analysis of human chromosome 6.</title>
        <authorList>
            <person name="Mungall A.J."/>
            <person name="Palmer S.A."/>
            <person name="Sims S.K."/>
            <person name="Edwards C.A."/>
            <person name="Ashurst J.L."/>
            <person name="Wilming L."/>
            <person name="Jones M.C."/>
            <person name="Horton R."/>
            <person name="Hunt S.E."/>
            <person name="Scott C.E."/>
            <person name="Gilbert J.G.R."/>
            <person name="Clamp M.E."/>
            <person name="Bethel G."/>
            <person name="Milne S."/>
            <person name="Ainscough R."/>
            <person name="Almeida J.P."/>
            <person name="Ambrose K.D."/>
            <person name="Andrews T.D."/>
            <person name="Ashwell R.I.S."/>
            <person name="Babbage A.K."/>
            <person name="Bagguley C.L."/>
            <person name="Bailey J."/>
            <person name="Banerjee R."/>
            <person name="Barker D.J."/>
            <person name="Barlow K.F."/>
            <person name="Bates K."/>
            <person name="Beare D.M."/>
            <person name="Beasley H."/>
            <person name="Beasley O."/>
            <person name="Bird C.P."/>
            <person name="Blakey S.E."/>
            <person name="Bray-Allen S."/>
            <person name="Brook J."/>
            <person name="Brown A.J."/>
            <person name="Brown J.Y."/>
            <person name="Burford D.C."/>
            <person name="Burrill W."/>
            <person name="Burton J."/>
            <person name="Carder C."/>
            <person name="Carter N.P."/>
            <person name="Chapman J.C."/>
            <person name="Clark S.Y."/>
            <person name="Clark G."/>
            <person name="Clee C.M."/>
            <person name="Clegg S."/>
            <person name="Cobley V."/>
            <person name="Collier R.E."/>
            <person name="Collins J.E."/>
            <person name="Colman L.K."/>
            <person name="Corby N.R."/>
            <person name="Coville G.J."/>
            <person name="Culley K.M."/>
            <person name="Dhami P."/>
            <person name="Davies J."/>
            <person name="Dunn M."/>
            <person name="Earthrowl M.E."/>
            <person name="Ellington A.E."/>
            <person name="Evans K.A."/>
            <person name="Faulkner L."/>
            <person name="Francis M.D."/>
            <person name="Frankish A."/>
            <person name="Frankland J."/>
            <person name="French L."/>
            <person name="Garner P."/>
            <person name="Garnett J."/>
            <person name="Ghori M.J."/>
            <person name="Gilby L.M."/>
            <person name="Gillson C.J."/>
            <person name="Glithero R.J."/>
            <person name="Grafham D.V."/>
            <person name="Grant M."/>
            <person name="Gribble S."/>
            <person name="Griffiths C."/>
            <person name="Griffiths M.N.D."/>
            <person name="Hall R."/>
            <person name="Halls K.S."/>
            <person name="Hammond S."/>
            <person name="Harley J.L."/>
            <person name="Hart E.A."/>
            <person name="Heath P.D."/>
            <person name="Heathcott R."/>
            <person name="Holmes S.J."/>
            <person name="Howden P.J."/>
            <person name="Howe K.L."/>
            <person name="Howell G.R."/>
            <person name="Huckle E."/>
            <person name="Humphray S.J."/>
            <person name="Humphries M.D."/>
            <person name="Hunt A.R."/>
            <person name="Johnson C.M."/>
            <person name="Joy A.A."/>
            <person name="Kay M."/>
            <person name="Keenan S.J."/>
            <person name="Kimberley A.M."/>
            <person name="King A."/>
            <person name="Laird G.K."/>
            <person name="Langford C."/>
            <person name="Lawlor S."/>
            <person name="Leongamornlert D.A."/>
            <person name="Leversha M."/>
            <person name="Lloyd C.R."/>
            <person name="Lloyd D.M."/>
            <person name="Loveland J.E."/>
            <person name="Lovell J."/>
            <person name="Martin S."/>
            <person name="Mashreghi-Mohammadi M."/>
            <person name="Maslen G.L."/>
            <person name="Matthews L."/>
            <person name="McCann O.T."/>
            <person name="McLaren S.J."/>
            <person name="McLay K."/>
            <person name="McMurray A."/>
            <person name="Moore M.J.F."/>
            <person name="Mullikin J.C."/>
            <person name="Niblett D."/>
            <person name="Nickerson T."/>
            <person name="Novik K.L."/>
            <person name="Oliver K."/>
            <person name="Overton-Larty E.K."/>
            <person name="Parker A."/>
            <person name="Patel R."/>
            <person name="Pearce A.V."/>
            <person name="Peck A.I."/>
            <person name="Phillimore B.J.C.T."/>
            <person name="Phillips S."/>
            <person name="Plumb R.W."/>
            <person name="Porter K.M."/>
            <person name="Ramsey Y."/>
            <person name="Ranby S.A."/>
            <person name="Rice C.M."/>
            <person name="Ross M.T."/>
            <person name="Searle S.M."/>
            <person name="Sehra H.K."/>
            <person name="Sheridan E."/>
            <person name="Skuce C.D."/>
            <person name="Smith S."/>
            <person name="Smith M."/>
            <person name="Spraggon L."/>
            <person name="Squares S.L."/>
            <person name="Steward C.A."/>
            <person name="Sycamore N."/>
            <person name="Tamlyn-Hall G."/>
            <person name="Tester J."/>
            <person name="Theaker A.J."/>
            <person name="Thomas D.W."/>
            <person name="Thorpe A."/>
            <person name="Tracey A."/>
            <person name="Tromans A."/>
            <person name="Tubby B."/>
            <person name="Wall M."/>
            <person name="Wallis J.M."/>
            <person name="West A.P."/>
            <person name="White S.S."/>
            <person name="Whitehead S.L."/>
            <person name="Whittaker H."/>
            <person name="Wild A."/>
            <person name="Willey D.J."/>
            <person name="Wilmer T.E."/>
            <person name="Wood J.M."/>
            <person name="Wray P.W."/>
            <person name="Wyatt J.C."/>
            <person name="Young L."/>
            <person name="Younger R.M."/>
            <person name="Bentley D.R."/>
            <person name="Coulson A."/>
            <person name="Durbin R.M."/>
            <person name="Hubbard T."/>
            <person name="Sulston J.E."/>
            <person name="Dunham I."/>
            <person name="Rogers J."/>
            <person name="Beck S."/>
        </authorList>
    </citation>
    <scope>NUCLEOTIDE SEQUENCE [LARGE SCALE GENOMIC DNA]</scope>
</reference>
<reference key="5">
    <citation type="journal article" date="2004" name="Genome Res.">
        <title>The status, quality, and expansion of the NIH full-length cDNA project: the Mammalian Gene Collection (MGC).</title>
        <authorList>
            <consortium name="The MGC Project Team"/>
        </authorList>
    </citation>
    <scope>NUCLEOTIDE SEQUENCE [LARGE SCALE MRNA] (ISOFORM 2)</scope>
</reference>
<feature type="chain" id="PRO_0000190036" description="Protein unc-93 homolog A">
    <location>
        <begin position="1"/>
        <end position="457"/>
    </location>
</feature>
<feature type="transmembrane region" description="Helical" evidence="1">
    <location>
        <begin position="8"/>
        <end position="28"/>
    </location>
</feature>
<feature type="transmembrane region" description="Helical" evidence="1">
    <location>
        <begin position="42"/>
        <end position="62"/>
    </location>
</feature>
<feature type="transmembrane region" description="Helical" evidence="1">
    <location>
        <begin position="65"/>
        <end position="85"/>
    </location>
</feature>
<feature type="transmembrane region" description="Helical" evidence="1">
    <location>
        <begin position="86"/>
        <end position="106"/>
    </location>
</feature>
<feature type="transmembrane region" description="Helical" evidence="1">
    <location>
        <begin position="140"/>
        <end position="160"/>
    </location>
</feature>
<feature type="transmembrane region" description="Helical" evidence="1">
    <location>
        <begin position="202"/>
        <end position="222"/>
    </location>
</feature>
<feature type="transmembrane region" description="Helical" evidence="1">
    <location>
        <begin position="257"/>
        <end position="277"/>
    </location>
</feature>
<feature type="transmembrane region" description="Helical" evidence="1">
    <location>
        <begin position="291"/>
        <end position="311"/>
    </location>
</feature>
<feature type="transmembrane region" description="Helical" evidence="1">
    <location>
        <begin position="320"/>
        <end position="340"/>
    </location>
</feature>
<feature type="transmembrane region" description="Helical" evidence="1">
    <location>
        <begin position="344"/>
        <end position="364"/>
    </location>
</feature>
<feature type="transmembrane region" description="Helical" evidence="1">
    <location>
        <begin position="395"/>
        <end position="415"/>
    </location>
</feature>
<feature type="glycosylation site" description="N-linked (GlcNAc...) asparagine" evidence="1">
    <location>
        <position position="190"/>
    </location>
</feature>
<feature type="splice variant" id="VSP_042772" description="In isoform 2." evidence="3">
    <location>
        <begin position="167"/>
        <end position="208"/>
    </location>
</feature>
<feature type="sequence variant" id="VAR_052473" description="In dbSNP:rs36110805.">
    <original>R</original>
    <variation>K</variation>
    <location>
        <position position="6"/>
    </location>
</feature>
<feature type="sequence variant" id="VAR_052474" description="In dbSNP:rs35313366.">
    <original>K</original>
    <variation>Q</variation>
    <location>
        <position position="128"/>
    </location>
</feature>
<feature type="sequence variant" id="VAR_022650" description="In dbSNP:rs2072767." evidence="2">
    <original>V</original>
    <variation>I</variation>
    <location>
        <position position="292"/>
    </location>
</feature>
<feature type="sequence variant" id="VAR_052475" description="In dbSNP:rs4708771.">
    <original>V</original>
    <variation>M</variation>
    <location>
        <position position="295"/>
    </location>
</feature>
<feature type="sequence variant" id="VAR_061874" description="In dbSNP:rs35854179.">
    <original>V</original>
    <variation>M</variation>
    <location>
        <position position="308"/>
    </location>
</feature>
<feature type="sequence variant" id="VAR_022651" description="In dbSNP:rs663227." evidence="2">
    <original>Y</original>
    <variation>H</variation>
    <location>
        <position position="387"/>
    </location>
</feature>
<feature type="sequence variant" id="VAR_059849" description="In dbSNP:rs9459921.">
    <original>M</original>
    <variation>I</variation>
    <location>
        <position position="403"/>
    </location>
</feature>
<feature type="sequence variant" id="VAR_022652" description="In dbSNP:rs663606." evidence="2">
    <original>M</original>
    <variation>T</variation>
    <location>
        <position position="403"/>
    </location>
</feature>
<feature type="sequence variant" id="VAR_022653" description="In dbSNP:rs7739897." evidence="2">
    <original>V</original>
    <variation>I</variation>
    <location>
        <position position="409"/>
    </location>
</feature>
<feature type="sequence variant" id="VAR_022654" description="In dbSNP:rs752323292." evidence="2">
    <original>V</original>
    <variation>A</variation>
    <location>
        <position position="445"/>
    </location>
</feature>
<keyword id="KW-0025">Alternative splicing</keyword>
<keyword id="KW-1003">Cell membrane</keyword>
<keyword id="KW-0325">Glycoprotein</keyword>
<keyword id="KW-0472">Membrane</keyword>
<keyword id="KW-1267">Proteomics identification</keyword>
<keyword id="KW-1185">Reference proteome</keyword>
<keyword id="KW-0812">Transmembrane</keyword>
<keyword id="KW-1133">Transmembrane helix</keyword>
<name>UN93A_HUMAN</name>
<comment type="interaction">
    <interactant intactId="EBI-13356252">
        <id>Q86WB7-2</id>
    </interactant>
    <interactant intactId="EBI-348517">
        <id>O95870</id>
        <label>ABHD16A</label>
    </interactant>
    <organismsDiffer>false</organismsDiffer>
    <experiments>3</experiments>
</comment>
<comment type="interaction">
    <interactant intactId="EBI-13356252">
        <id>Q86WB7-2</id>
    </interactant>
    <interactant intactId="EBI-13059134">
        <id>Q13520</id>
        <label>AQP6</label>
    </interactant>
    <organismsDiffer>false</organismsDiffer>
    <experiments>3</experiments>
</comment>
<comment type="interaction">
    <interactant intactId="EBI-13356252">
        <id>Q86WB7-2</id>
    </interactant>
    <interactant intactId="EBI-12069500">
        <id>Q9HD20-3</id>
        <label>ATP13A1</label>
    </interactant>
    <organismsDiffer>false</organismsDiffer>
    <experiments>3</experiments>
</comment>
<comment type="interaction">
    <interactant intactId="EBI-13356252">
        <id>Q86WB7-2</id>
    </interactant>
    <interactant intactId="EBI-2873970">
        <id>P13236</id>
        <label>CCL4</label>
    </interactant>
    <organismsDiffer>false</organismsDiffer>
    <experiments>3</experiments>
</comment>
<comment type="interaction">
    <interactant intactId="EBI-13356252">
        <id>Q86WB7-2</id>
    </interactant>
    <interactant intactId="EBI-3915344">
        <id>Q08708</id>
        <label>CD300C</label>
    </interactant>
    <organismsDiffer>false</organismsDiffer>
    <experiments>3</experiments>
</comment>
<comment type="interaction">
    <interactant intactId="EBI-13356252">
        <id>Q86WB7-2</id>
    </interactant>
    <interactant intactId="EBI-358858">
        <id>O14735</id>
        <label>CDIPT</label>
    </interactant>
    <organismsDiffer>false</organismsDiffer>
    <experiments>3</experiments>
</comment>
<comment type="interaction">
    <interactant intactId="EBI-13356252">
        <id>Q86WB7-2</id>
    </interactant>
    <interactant intactId="EBI-17458373">
        <id>P48165</id>
        <label>GJA8</label>
    </interactant>
    <organismsDiffer>false</organismsDiffer>
    <experiments>3</experiments>
</comment>
<comment type="interaction">
    <interactant intactId="EBI-13356252">
        <id>Q86WB7-2</id>
    </interactant>
    <interactant intactId="EBI-17935713">
        <id>Q96P66</id>
        <label>GPR101</label>
    </interactant>
    <organismsDiffer>false</organismsDiffer>
    <experiments>3</experiments>
</comment>
<comment type="interaction">
    <interactant intactId="EBI-13356252">
        <id>Q86WB7-2</id>
    </interactant>
    <interactant intactId="EBI-11955647">
        <id>Q8TDV0</id>
        <label>GPR151</label>
    </interactant>
    <organismsDiffer>false</organismsDiffer>
    <experiments>3</experiments>
</comment>
<comment type="interaction">
    <interactant intactId="EBI-13356252">
        <id>Q86WB7-2</id>
    </interactant>
    <interactant intactId="EBI-12133176">
        <id>Q9UIQ6-2</id>
        <label>LNPEP</label>
    </interactant>
    <organismsDiffer>false</organismsDiffer>
    <experiments>3</experiments>
</comment>
<comment type="interaction">
    <interactant intactId="EBI-13356252">
        <id>Q86WB7-2</id>
    </interactant>
    <interactant intactId="EBI-14772355">
        <id>Q02094</id>
        <label>RHAG</label>
    </interactant>
    <organismsDiffer>false</organismsDiffer>
    <experiments>3</experiments>
</comment>
<comment type="interaction">
    <interactant intactId="EBI-13356252">
        <id>Q86WB7-2</id>
    </interactant>
    <interactant intactId="EBI-12867720">
        <id>Q6ICL7</id>
        <label>SLC35E4</label>
    </interactant>
    <organismsDiffer>false</organismsDiffer>
    <experiments>3</experiments>
</comment>
<comment type="interaction">
    <interactant intactId="EBI-13356252">
        <id>Q86WB7-2</id>
    </interactant>
    <interactant intactId="EBI-1051105">
        <id>Q92504</id>
        <label>SLC39A7</label>
    </interactant>
    <organismsDiffer>false</organismsDiffer>
    <experiments>3</experiments>
</comment>
<comment type="interaction">
    <interactant intactId="EBI-13356252">
        <id>Q86WB7-2</id>
    </interactant>
    <interactant intactId="EBI-1222191">
        <id>Q6P1K1</id>
        <label>SLC48A1</label>
    </interactant>
    <organismsDiffer>false</organismsDiffer>
    <experiments>3</experiments>
</comment>
<comment type="interaction">
    <interactant intactId="EBI-13356252">
        <id>Q86WB7-2</id>
    </interactant>
    <interactant intactId="EBI-12187159">
        <id>O43759-2</id>
        <label>SYNGR1</label>
    </interactant>
    <organismsDiffer>false</organismsDiffer>
    <experiments>3</experiments>
</comment>
<comment type="interaction">
    <interactant intactId="EBI-13356252">
        <id>Q86WB7-2</id>
    </interactant>
    <interactant intactId="EBI-6268651">
        <id>Q9NPL8</id>
        <label>TIMMDC1</label>
    </interactant>
    <organismsDiffer>false</organismsDiffer>
    <experiments>3</experiments>
</comment>
<comment type="interaction">
    <interactant intactId="EBI-13356252">
        <id>Q86WB7-2</id>
    </interactant>
    <interactant intactId="EBI-8638294">
        <id>Q9NUH8</id>
        <label>TMEM14B</label>
    </interactant>
    <organismsDiffer>false</organismsDiffer>
    <experiments>3</experiments>
</comment>
<comment type="interaction">
    <interactant intactId="EBI-13356252">
        <id>Q86WB7-2</id>
    </interactant>
    <interactant intactId="EBI-10982110">
        <id>Q96Q45-2</id>
        <label>TMEM237</label>
    </interactant>
    <organismsDiffer>false</organismsDiffer>
    <experiments>6</experiments>
</comment>
<comment type="interaction">
    <interactant intactId="EBI-13356252">
        <id>Q86WB7-2</id>
    </interactant>
    <interactant intactId="EBI-6447886">
        <id>Q9Y320</id>
        <label>TMX2</label>
    </interactant>
    <organismsDiffer>false</organismsDiffer>
    <experiments>3</experiments>
</comment>
<comment type="subcellular location">
    <subcellularLocation>
        <location evidence="2">Cell membrane</location>
        <topology evidence="2">Multi-pass membrane protein</topology>
    </subcellularLocation>
</comment>
<comment type="alternative products">
    <event type="alternative splicing"/>
    <isoform>
        <id>Q86WB7-1</id>
        <name>1</name>
        <sequence type="displayed"/>
    </isoform>
    <isoform>
        <id>Q86WB7-2</id>
        <name>2</name>
        <sequence type="described" ref="VSP_042772"/>
    </isoform>
</comment>
<comment type="tissue specificity">
    <text evidence="2">Expressed in testis, small intestine, spleen, prostate and ovary.</text>
</comment>
<comment type="miscellaneous">
    <text>Although UNC93A gene is located in a region of the genome frequently associated with ovarian cancer, no evidence have been found for a tumor suppressor function.</text>
</comment>
<comment type="similarity">
    <text evidence="4">Belongs to the unc-93 family.</text>
</comment>
<organism>
    <name type="scientific">Homo sapiens</name>
    <name type="common">Human</name>
    <dbReference type="NCBI Taxonomy" id="9606"/>
    <lineage>
        <taxon>Eukaryota</taxon>
        <taxon>Metazoa</taxon>
        <taxon>Chordata</taxon>
        <taxon>Craniata</taxon>
        <taxon>Vertebrata</taxon>
        <taxon>Euteleostomi</taxon>
        <taxon>Mammalia</taxon>
        <taxon>Eutheria</taxon>
        <taxon>Euarchontoglires</taxon>
        <taxon>Primates</taxon>
        <taxon>Haplorrhini</taxon>
        <taxon>Catarrhini</taxon>
        <taxon>Hominidae</taxon>
        <taxon>Homo</taxon>
    </lineage>
</organism>
<proteinExistence type="evidence at protein level"/>
<evidence type="ECO:0000255" key="1"/>
<evidence type="ECO:0000269" key="2">
    <source>
    </source>
</evidence>
<evidence type="ECO:0000303" key="3">
    <source>
    </source>
</evidence>
<evidence type="ECO:0000305" key="4"/>
<protein>
    <recommendedName>
        <fullName>Protein unc-93 homolog A</fullName>
        <shortName>HmUnc-93A</shortName>
        <shortName>Unc-93A</shortName>
    </recommendedName>
</protein>